<accession>P54836</accession>
<reference key="1">
    <citation type="journal article" date="1997" name="Electrophoresis">
        <title>HSC-2DPAGE and the two-dimensional gel electrophoresis database of dog heart proteins.</title>
        <authorList>
            <person name="Dunn M.J."/>
            <person name="Corbett J.M."/>
            <person name="Wheeler C.H."/>
        </authorList>
    </citation>
    <scope>PROTEIN SEQUENCE</scope>
    <source>
        <tissue>Heart</tissue>
    </source>
</reference>
<gene>
    <name evidence="1" type="primary">IDH3A</name>
</gene>
<sequence>AIEVQTVTLIPGD</sequence>
<protein>
    <recommendedName>
        <fullName evidence="1">Isocitrate dehydrogenase [NAD] subunit alpha, mitochondrial</fullName>
        <ecNumber evidence="1">1.1.1.41</ecNumber>
    </recommendedName>
    <alternativeName>
        <fullName>Isocitric dehydrogenase subunit alpha</fullName>
    </alternativeName>
    <alternativeName>
        <fullName>NAD(+)-specific ICDH subunit alpha</fullName>
    </alternativeName>
</protein>
<name>IDH3A_CANLF</name>
<evidence type="ECO:0000250" key="1">
    <source>
        <dbReference type="UniProtKB" id="P50213"/>
    </source>
</evidence>
<evidence type="ECO:0000305" key="2"/>
<feature type="chain" id="PRO_0000083589" description="Isocitrate dehydrogenase [NAD] subunit alpha, mitochondrial">
    <location>
        <begin position="1"/>
        <end position="13" status="greater than"/>
    </location>
</feature>
<feature type="non-terminal residue">
    <location>
        <position position="13"/>
    </location>
</feature>
<proteinExistence type="evidence at protein level"/>
<dbReference type="EC" id="1.1.1.41" evidence="1"/>
<dbReference type="FunCoup" id="P54836">
    <property type="interactions" value="1481"/>
</dbReference>
<dbReference type="InParanoid" id="P54836"/>
<dbReference type="OrthoDB" id="10261637at2759"/>
<dbReference type="Proteomes" id="UP000002254">
    <property type="component" value="Unplaced"/>
</dbReference>
<dbReference type="Proteomes" id="UP000694429">
    <property type="component" value="Unplaced"/>
</dbReference>
<dbReference type="Proteomes" id="UP000694542">
    <property type="component" value="Unplaced"/>
</dbReference>
<dbReference type="Proteomes" id="UP000805418">
    <property type="component" value="Unplaced"/>
</dbReference>
<dbReference type="GO" id="GO:0005739">
    <property type="term" value="C:mitochondrion"/>
    <property type="evidence" value="ECO:0007669"/>
    <property type="project" value="UniProtKB-SubCell"/>
</dbReference>
<dbReference type="GO" id="GO:0004449">
    <property type="term" value="F:isocitrate dehydrogenase (NAD+) activity"/>
    <property type="evidence" value="ECO:0000250"/>
    <property type="project" value="UniProtKB"/>
</dbReference>
<dbReference type="GO" id="GO:0000287">
    <property type="term" value="F:magnesium ion binding"/>
    <property type="evidence" value="ECO:0000250"/>
    <property type="project" value="UniProtKB"/>
</dbReference>
<dbReference type="GO" id="GO:0006099">
    <property type="term" value="P:tricarboxylic acid cycle"/>
    <property type="evidence" value="ECO:0007669"/>
    <property type="project" value="UniProtKB-KW"/>
</dbReference>
<organism>
    <name type="scientific">Canis lupus familiaris</name>
    <name type="common">Dog</name>
    <name type="synonym">Canis familiaris</name>
    <dbReference type="NCBI Taxonomy" id="9615"/>
    <lineage>
        <taxon>Eukaryota</taxon>
        <taxon>Metazoa</taxon>
        <taxon>Chordata</taxon>
        <taxon>Craniata</taxon>
        <taxon>Vertebrata</taxon>
        <taxon>Euteleostomi</taxon>
        <taxon>Mammalia</taxon>
        <taxon>Eutheria</taxon>
        <taxon>Laurasiatheria</taxon>
        <taxon>Carnivora</taxon>
        <taxon>Caniformia</taxon>
        <taxon>Canidae</taxon>
        <taxon>Canis</taxon>
    </lineage>
</organism>
<keyword id="KW-0903">Direct protein sequencing</keyword>
<keyword id="KW-0496">Mitochondrion</keyword>
<keyword id="KW-0520">NAD</keyword>
<keyword id="KW-0560">Oxidoreductase</keyword>
<keyword id="KW-1185">Reference proteome</keyword>
<keyword id="KW-0816">Tricarboxylic acid cycle</keyword>
<comment type="function">
    <text evidence="1">Catalytic subunit of the enzyme which catalyzes the decarboxylation of isocitrate (ICT) into alpha-ketoglutarate. The heterodimer composed of the alpha (IDH3A) and beta (IDH3B) subunits and the heterodimer composed of the alpha (IDH3A) and gamma (IDH3G) subunits, have considerable basal activity but the full activity of the heterotetramer (containing two subunits of IDH3A, one of IDH3B and one of IDH3G) requires the assembly and cooperative function of both heterodimers.</text>
</comment>
<comment type="catalytic activity">
    <reaction evidence="1">
        <text>D-threo-isocitrate + NAD(+) = 2-oxoglutarate + CO2 + NADH</text>
        <dbReference type="Rhea" id="RHEA:23632"/>
        <dbReference type="ChEBI" id="CHEBI:15562"/>
        <dbReference type="ChEBI" id="CHEBI:16526"/>
        <dbReference type="ChEBI" id="CHEBI:16810"/>
        <dbReference type="ChEBI" id="CHEBI:57540"/>
        <dbReference type="ChEBI" id="CHEBI:57945"/>
        <dbReference type="EC" id="1.1.1.41"/>
    </reaction>
    <physiologicalReaction direction="left-to-right" evidence="1">
        <dbReference type="Rhea" id="RHEA:23633"/>
    </physiologicalReaction>
</comment>
<comment type="activity regulation">
    <text evidence="1">The heterotetramer and the heterodimer composed of IDH3A and IDH3G subunits can be allosterically activated by citrate (CIT) or/and ADP, and the two activators can act independently or synergistically. The heterodimer composed of IDH3A and IDH3B subunits cannot be allosterically regulated and the allosteric regulation of the heterotetramer is through the IDH3G subunit and not the IDH3B subunit. The IDH3G subunit contains the allosteric site which consists of a CIT-binding site and an ADP-binding site, and the binding of CIT and ADP causes conformational changes at the allosteric site which are transmitted to the active site in the catalytic subunit (IDH3A) through a cascade of conformational changes at the heterodimer interface, leading to stabilization of the isocitrate-binding at the active site and thus activation of the enzyme. ATP can activate the heterotetramer and the heterodimer composed of IDH3A and IDH3G subunits at low concentrations but inhibits their activities at high concentrations, whereas ATP exhibits only inhibitory effect on the heterodimer composed of IDH3A and IDH3B subunits.</text>
</comment>
<comment type="subunit">
    <text evidence="1">Heterooligomer of subunits alpha (IDH3A), beta (IDH3B), and gamma (IDH3G) in the apparent ratio of 2:1:1. The heterodimer containing one IDH3A and one IDH3B subunit and the heterodimer containing one IDH3A and one IDH3G subunit assemble into a heterotetramer (which contains two subunits of IDH3A, one of IDH3B and one of IDH3G) and further into the heterooctamer.</text>
</comment>
<comment type="subcellular location">
    <subcellularLocation>
        <location>Mitochondrion</location>
    </subcellularLocation>
</comment>
<comment type="similarity">
    <text evidence="2">Belongs to the isocitrate and isopropylmalate dehydrogenases family.</text>
</comment>